<feature type="chain" id="PRO_1000055056" description="ATP synthase subunit alpha">
    <location>
        <begin position="1"/>
        <end position="505"/>
    </location>
</feature>
<feature type="binding site" evidence="1">
    <location>
        <begin position="171"/>
        <end position="178"/>
    </location>
    <ligand>
        <name>ATP</name>
        <dbReference type="ChEBI" id="CHEBI:30616"/>
    </ligand>
</feature>
<feature type="site" description="Required for activity" evidence="1">
    <location>
        <position position="364"/>
    </location>
</feature>
<dbReference type="EC" id="7.1.2.2" evidence="1"/>
<dbReference type="EMBL" id="CP000792">
    <property type="protein sequence ID" value="EAT97454.1"/>
    <property type="molecule type" value="Genomic_DNA"/>
</dbReference>
<dbReference type="RefSeq" id="WP_012001333.1">
    <property type="nucleotide sequence ID" value="NC_009802.2"/>
</dbReference>
<dbReference type="SMR" id="A7ZC35"/>
<dbReference type="STRING" id="360104.CCC13826_0915"/>
<dbReference type="KEGG" id="cco:CCC13826_0915"/>
<dbReference type="eggNOG" id="COG0056">
    <property type="taxonomic scope" value="Bacteria"/>
</dbReference>
<dbReference type="HOGENOM" id="CLU_010091_2_1_7"/>
<dbReference type="OrthoDB" id="9803053at2"/>
<dbReference type="Proteomes" id="UP000001121">
    <property type="component" value="Chromosome"/>
</dbReference>
<dbReference type="GO" id="GO:0005886">
    <property type="term" value="C:plasma membrane"/>
    <property type="evidence" value="ECO:0007669"/>
    <property type="project" value="UniProtKB-SubCell"/>
</dbReference>
<dbReference type="GO" id="GO:0045259">
    <property type="term" value="C:proton-transporting ATP synthase complex"/>
    <property type="evidence" value="ECO:0007669"/>
    <property type="project" value="UniProtKB-KW"/>
</dbReference>
<dbReference type="GO" id="GO:0043531">
    <property type="term" value="F:ADP binding"/>
    <property type="evidence" value="ECO:0007669"/>
    <property type="project" value="TreeGrafter"/>
</dbReference>
<dbReference type="GO" id="GO:0005524">
    <property type="term" value="F:ATP binding"/>
    <property type="evidence" value="ECO:0007669"/>
    <property type="project" value="UniProtKB-UniRule"/>
</dbReference>
<dbReference type="GO" id="GO:0046933">
    <property type="term" value="F:proton-transporting ATP synthase activity, rotational mechanism"/>
    <property type="evidence" value="ECO:0007669"/>
    <property type="project" value="UniProtKB-UniRule"/>
</dbReference>
<dbReference type="CDD" id="cd18113">
    <property type="entry name" value="ATP-synt_F1_alpha_C"/>
    <property type="match status" value="1"/>
</dbReference>
<dbReference type="CDD" id="cd18116">
    <property type="entry name" value="ATP-synt_F1_alpha_N"/>
    <property type="match status" value="1"/>
</dbReference>
<dbReference type="CDD" id="cd01132">
    <property type="entry name" value="F1-ATPase_alpha_CD"/>
    <property type="match status" value="1"/>
</dbReference>
<dbReference type="FunFam" id="1.20.150.20:FF:000001">
    <property type="entry name" value="ATP synthase subunit alpha"/>
    <property type="match status" value="1"/>
</dbReference>
<dbReference type="FunFam" id="2.40.30.20:FF:000001">
    <property type="entry name" value="ATP synthase subunit alpha"/>
    <property type="match status" value="1"/>
</dbReference>
<dbReference type="FunFam" id="3.40.50.300:FF:000002">
    <property type="entry name" value="ATP synthase subunit alpha"/>
    <property type="match status" value="1"/>
</dbReference>
<dbReference type="Gene3D" id="2.40.30.20">
    <property type="match status" value="1"/>
</dbReference>
<dbReference type="Gene3D" id="1.20.150.20">
    <property type="entry name" value="ATP synthase alpha/beta chain, C-terminal domain"/>
    <property type="match status" value="1"/>
</dbReference>
<dbReference type="Gene3D" id="3.40.50.300">
    <property type="entry name" value="P-loop containing nucleotide triphosphate hydrolases"/>
    <property type="match status" value="1"/>
</dbReference>
<dbReference type="HAMAP" id="MF_01346">
    <property type="entry name" value="ATP_synth_alpha_bact"/>
    <property type="match status" value="1"/>
</dbReference>
<dbReference type="InterPro" id="IPR023366">
    <property type="entry name" value="ATP_synth_asu-like_sf"/>
</dbReference>
<dbReference type="InterPro" id="IPR000793">
    <property type="entry name" value="ATP_synth_asu_C"/>
</dbReference>
<dbReference type="InterPro" id="IPR038376">
    <property type="entry name" value="ATP_synth_asu_C_sf"/>
</dbReference>
<dbReference type="InterPro" id="IPR033732">
    <property type="entry name" value="ATP_synth_F1_a_nt-bd_dom"/>
</dbReference>
<dbReference type="InterPro" id="IPR005294">
    <property type="entry name" value="ATP_synth_F1_asu"/>
</dbReference>
<dbReference type="InterPro" id="IPR020003">
    <property type="entry name" value="ATPase_a/bsu_AS"/>
</dbReference>
<dbReference type="InterPro" id="IPR004100">
    <property type="entry name" value="ATPase_F1/V1/A1_a/bsu_N"/>
</dbReference>
<dbReference type="InterPro" id="IPR036121">
    <property type="entry name" value="ATPase_F1/V1/A1_a/bsu_N_sf"/>
</dbReference>
<dbReference type="InterPro" id="IPR000194">
    <property type="entry name" value="ATPase_F1/V1/A1_a/bsu_nucl-bd"/>
</dbReference>
<dbReference type="InterPro" id="IPR027417">
    <property type="entry name" value="P-loop_NTPase"/>
</dbReference>
<dbReference type="NCBIfam" id="TIGR00962">
    <property type="entry name" value="atpA"/>
    <property type="match status" value="1"/>
</dbReference>
<dbReference type="NCBIfam" id="NF009884">
    <property type="entry name" value="PRK13343.1"/>
    <property type="match status" value="1"/>
</dbReference>
<dbReference type="PANTHER" id="PTHR48082">
    <property type="entry name" value="ATP SYNTHASE SUBUNIT ALPHA, MITOCHONDRIAL"/>
    <property type="match status" value="1"/>
</dbReference>
<dbReference type="PANTHER" id="PTHR48082:SF2">
    <property type="entry name" value="ATP SYNTHASE SUBUNIT ALPHA, MITOCHONDRIAL"/>
    <property type="match status" value="1"/>
</dbReference>
<dbReference type="Pfam" id="PF00006">
    <property type="entry name" value="ATP-synt_ab"/>
    <property type="match status" value="1"/>
</dbReference>
<dbReference type="Pfam" id="PF00306">
    <property type="entry name" value="ATP-synt_ab_C"/>
    <property type="match status" value="1"/>
</dbReference>
<dbReference type="Pfam" id="PF02874">
    <property type="entry name" value="ATP-synt_ab_N"/>
    <property type="match status" value="1"/>
</dbReference>
<dbReference type="PIRSF" id="PIRSF039088">
    <property type="entry name" value="F_ATPase_subunit_alpha"/>
    <property type="match status" value="1"/>
</dbReference>
<dbReference type="SUPFAM" id="SSF47917">
    <property type="entry name" value="C-terminal domain of alpha and beta subunits of F1 ATP synthase"/>
    <property type="match status" value="1"/>
</dbReference>
<dbReference type="SUPFAM" id="SSF50615">
    <property type="entry name" value="N-terminal domain of alpha and beta subunits of F1 ATP synthase"/>
    <property type="match status" value="1"/>
</dbReference>
<dbReference type="SUPFAM" id="SSF52540">
    <property type="entry name" value="P-loop containing nucleoside triphosphate hydrolases"/>
    <property type="match status" value="1"/>
</dbReference>
<dbReference type="PROSITE" id="PS00152">
    <property type="entry name" value="ATPASE_ALPHA_BETA"/>
    <property type="match status" value="1"/>
</dbReference>
<name>ATPA_CAMC1</name>
<gene>
    <name evidence="1" type="primary">atpA</name>
    <name type="ordered locus">Ccon26_04420</name>
    <name type="ORF">CCC13826_0915</name>
</gene>
<reference key="1">
    <citation type="submission" date="2007-10" db="EMBL/GenBank/DDBJ databases">
        <title>Genome sequence of Campylobacter concisus 13826 isolated from human feces.</title>
        <authorList>
            <person name="Fouts D.E."/>
            <person name="Mongodin E.F."/>
            <person name="Puiu D."/>
            <person name="Sebastian Y."/>
            <person name="Miller W.G."/>
            <person name="Mandrell R.E."/>
            <person name="On S."/>
            <person name="Nelson K.E."/>
        </authorList>
    </citation>
    <scope>NUCLEOTIDE SEQUENCE [LARGE SCALE GENOMIC DNA]</scope>
    <source>
        <strain>13826</strain>
    </source>
</reference>
<accession>A7ZC35</accession>
<protein>
    <recommendedName>
        <fullName evidence="1">ATP synthase subunit alpha</fullName>
        <ecNumber evidence="1">7.1.2.2</ecNumber>
    </recommendedName>
    <alternativeName>
        <fullName evidence="1">ATP synthase F1 sector subunit alpha</fullName>
    </alternativeName>
    <alternativeName>
        <fullName evidence="1">F-ATPase subunit alpha</fullName>
    </alternativeName>
</protein>
<sequence>MSAKIKADEISTIIKERIENFDLSVDVEETGKVISVADGVANVYGLKNVMAGEMVEFESGEKGMALNLEESSVGIVILGKTSGITEGSSVKRLKKLLRVPVGDALIGRVVNSLGEPIDAKGPIEATESRFVEEKAKGIMARKSVHEPLQTGIKAIDALVPIGRGQRELIIGDRQTGKTTVAIDTIINQKGQDVICIYVAIGQKQSTVAQVVKKLEEYGAMDYTIVVNAGASDAAALQYLAPYAGVTMGEYFRDNSRHALIIYDDLSKHAVAYREMSLILRRPPGREAYPGDVFYLHSRLLERASKLNDALGAGSLTALPIIETQAGDVSAYIPTNVISITDGQIFLESDLFNSGIRPAINVGLSVSRVGGAAQIKAIKQVSGTLRLDLAQYRELQAFAQFASDLDESSRKQLERGQKMVEVLKQPPYSPLPVENQVVIIFAGAKGYLDDVATANVTKFEAELYPYIEAKYPEIFEQIRTKKVIDKEVEEILHKALKDFKATFAAN</sequence>
<evidence type="ECO:0000255" key="1">
    <source>
        <dbReference type="HAMAP-Rule" id="MF_01346"/>
    </source>
</evidence>
<comment type="function">
    <text evidence="1">Produces ATP from ADP in the presence of a proton gradient across the membrane. The alpha chain is a regulatory subunit.</text>
</comment>
<comment type="catalytic activity">
    <reaction evidence="1">
        <text>ATP + H2O + 4 H(+)(in) = ADP + phosphate + 5 H(+)(out)</text>
        <dbReference type="Rhea" id="RHEA:57720"/>
        <dbReference type="ChEBI" id="CHEBI:15377"/>
        <dbReference type="ChEBI" id="CHEBI:15378"/>
        <dbReference type="ChEBI" id="CHEBI:30616"/>
        <dbReference type="ChEBI" id="CHEBI:43474"/>
        <dbReference type="ChEBI" id="CHEBI:456216"/>
        <dbReference type="EC" id="7.1.2.2"/>
    </reaction>
</comment>
<comment type="subunit">
    <text evidence="1">F-type ATPases have 2 components, CF(1) - the catalytic core - and CF(0) - the membrane proton channel. CF(1) has five subunits: alpha(3), beta(3), gamma(1), delta(1), epsilon(1). CF(0) has three main subunits: a(1), b(2) and c(9-12). The alpha and beta chains form an alternating ring which encloses part of the gamma chain. CF(1) is attached to CF(0) by a central stalk formed by the gamma and epsilon chains, while a peripheral stalk is formed by the delta and b chains.</text>
</comment>
<comment type="subcellular location">
    <subcellularLocation>
        <location evidence="1">Cell inner membrane</location>
        <topology evidence="1">Peripheral membrane protein</topology>
    </subcellularLocation>
</comment>
<comment type="similarity">
    <text evidence="1">Belongs to the ATPase alpha/beta chains family.</text>
</comment>
<proteinExistence type="inferred from homology"/>
<organism>
    <name type="scientific">Campylobacter concisus (strain 13826)</name>
    <dbReference type="NCBI Taxonomy" id="360104"/>
    <lineage>
        <taxon>Bacteria</taxon>
        <taxon>Pseudomonadati</taxon>
        <taxon>Campylobacterota</taxon>
        <taxon>Epsilonproteobacteria</taxon>
        <taxon>Campylobacterales</taxon>
        <taxon>Campylobacteraceae</taxon>
        <taxon>Campylobacter</taxon>
    </lineage>
</organism>
<keyword id="KW-0066">ATP synthesis</keyword>
<keyword id="KW-0067">ATP-binding</keyword>
<keyword id="KW-0997">Cell inner membrane</keyword>
<keyword id="KW-1003">Cell membrane</keyword>
<keyword id="KW-0139">CF(1)</keyword>
<keyword id="KW-0375">Hydrogen ion transport</keyword>
<keyword id="KW-0406">Ion transport</keyword>
<keyword id="KW-0472">Membrane</keyword>
<keyword id="KW-0547">Nucleotide-binding</keyword>
<keyword id="KW-1278">Translocase</keyword>
<keyword id="KW-0813">Transport</keyword>